<sequence>MPPKDDKKKKDAGKSAKKDKDPVNKSGGKAKKKKWSKGKVRDKLNNLVLFDKATYDKLCKEVPNYKLITPAVVSERLKIRGSLARAALQELLSKGLIKLVSKHRAQVIYTRNTKGGDAPAAGEDA</sequence>
<accession>Q56JX5</accession>
<keyword id="KW-0007">Acetylation</keyword>
<keyword id="KW-0963">Cytoplasm</keyword>
<keyword id="KW-1185">Reference proteome</keyword>
<keyword id="KW-0687">Ribonucleoprotein</keyword>
<keyword id="KW-0689">Ribosomal protein</keyword>
<gene>
    <name type="primary">RPS25</name>
</gene>
<organism>
    <name type="scientific">Bos taurus</name>
    <name type="common">Bovine</name>
    <dbReference type="NCBI Taxonomy" id="9913"/>
    <lineage>
        <taxon>Eukaryota</taxon>
        <taxon>Metazoa</taxon>
        <taxon>Chordata</taxon>
        <taxon>Craniata</taxon>
        <taxon>Vertebrata</taxon>
        <taxon>Euteleostomi</taxon>
        <taxon>Mammalia</taxon>
        <taxon>Eutheria</taxon>
        <taxon>Laurasiatheria</taxon>
        <taxon>Artiodactyla</taxon>
        <taxon>Ruminantia</taxon>
        <taxon>Pecora</taxon>
        <taxon>Bovidae</taxon>
        <taxon>Bovinae</taxon>
        <taxon>Bos</taxon>
    </lineage>
</organism>
<dbReference type="EMBL" id="AY911354">
    <property type="protein sequence ID" value="AAW82120.1"/>
    <property type="molecule type" value="mRNA"/>
</dbReference>
<dbReference type="EMBL" id="BC102560">
    <property type="protein sequence ID" value="AAI02561.1"/>
    <property type="molecule type" value="mRNA"/>
</dbReference>
<dbReference type="RefSeq" id="NP_001020486.1">
    <property type="nucleotide sequence ID" value="NM_001025315.1"/>
</dbReference>
<dbReference type="SMR" id="Q56JX5"/>
<dbReference type="FunCoup" id="Q56JX5">
    <property type="interactions" value="2461"/>
</dbReference>
<dbReference type="STRING" id="9913.ENSBTAP00000039829"/>
<dbReference type="PaxDb" id="9913-ENSBTAP00000039829"/>
<dbReference type="PeptideAtlas" id="Q56JX5"/>
<dbReference type="Ensembl" id="ENSBTAT00000018414.7">
    <property type="protein sequence ID" value="ENSBTAP00000018414.6"/>
    <property type="gene ID" value="ENSBTAG00000013866.7"/>
</dbReference>
<dbReference type="Ensembl" id="ENSBTAT00000040046.5">
    <property type="protein sequence ID" value="ENSBTAP00000039829.4"/>
    <property type="gene ID" value="ENSBTAG00000027772.5"/>
</dbReference>
<dbReference type="Ensembl" id="ENSBTAT00000112187.1">
    <property type="protein sequence ID" value="ENSBTAP00000093891.1"/>
    <property type="gene ID" value="ENSBTAG00000013866.7"/>
</dbReference>
<dbReference type="GeneID" id="282052"/>
<dbReference type="KEGG" id="bta:282052"/>
<dbReference type="CTD" id="6230"/>
<dbReference type="VEuPathDB" id="HostDB:ENSBTAG00000018987"/>
<dbReference type="VEuPathDB" id="HostDB:ENSBTAG00000027772"/>
<dbReference type="eggNOG" id="KOG1767">
    <property type="taxonomic scope" value="Eukaryota"/>
</dbReference>
<dbReference type="GeneTree" id="ENSGT00390000004856"/>
<dbReference type="HOGENOM" id="CLU_129470_0_1_1"/>
<dbReference type="InParanoid" id="Q56JX5"/>
<dbReference type="OMA" id="RIVHHSG"/>
<dbReference type="OrthoDB" id="9580478at2759"/>
<dbReference type="TreeFam" id="TF314909"/>
<dbReference type="Reactome" id="R-BTA-156827">
    <property type="pathway name" value="L13a-mediated translational silencing of Ceruloplasmin expression"/>
</dbReference>
<dbReference type="Reactome" id="R-BTA-1799339">
    <property type="pathway name" value="SRP-dependent cotranslational protein targeting to membrane"/>
</dbReference>
<dbReference type="Reactome" id="R-BTA-6791226">
    <property type="pathway name" value="Major pathway of rRNA processing in the nucleolus and cytosol"/>
</dbReference>
<dbReference type="Reactome" id="R-BTA-72649">
    <property type="pathway name" value="Translation initiation complex formation"/>
</dbReference>
<dbReference type="Reactome" id="R-BTA-72689">
    <property type="pathway name" value="Formation of a pool of free 40S subunits"/>
</dbReference>
<dbReference type="Reactome" id="R-BTA-72695">
    <property type="pathway name" value="Formation of the ternary complex, and subsequently, the 43S complex"/>
</dbReference>
<dbReference type="Reactome" id="R-BTA-72702">
    <property type="pathway name" value="Ribosomal scanning and start codon recognition"/>
</dbReference>
<dbReference type="Reactome" id="R-BTA-72706">
    <property type="pathway name" value="GTP hydrolysis and joining of the 60S ribosomal subunit"/>
</dbReference>
<dbReference type="Reactome" id="R-BTA-975956">
    <property type="pathway name" value="Nonsense Mediated Decay (NMD) independent of the Exon Junction Complex (EJC)"/>
</dbReference>
<dbReference type="Reactome" id="R-BTA-975957">
    <property type="pathway name" value="Nonsense Mediated Decay (NMD) enhanced by the Exon Junction Complex (EJC)"/>
</dbReference>
<dbReference type="Proteomes" id="UP000009136">
    <property type="component" value="Chromosome 15"/>
</dbReference>
<dbReference type="Proteomes" id="UP000009136">
    <property type="component" value="Chromosome 3"/>
</dbReference>
<dbReference type="Bgee" id="ENSBTAG00000018987">
    <property type="expression patterns" value="Expressed in semen and 83 other cell types or tissues"/>
</dbReference>
<dbReference type="GO" id="GO:0022627">
    <property type="term" value="C:cytosolic small ribosomal subunit"/>
    <property type="evidence" value="ECO:0000318"/>
    <property type="project" value="GO_Central"/>
</dbReference>
<dbReference type="GO" id="GO:0003735">
    <property type="term" value="F:structural constituent of ribosome"/>
    <property type="evidence" value="ECO:0000318"/>
    <property type="project" value="GO_Central"/>
</dbReference>
<dbReference type="FunFam" id="1.10.10.10:FF:000166">
    <property type="entry name" value="40S ribosomal protein S25"/>
    <property type="match status" value="1"/>
</dbReference>
<dbReference type="Gene3D" id="1.10.10.10">
    <property type="entry name" value="Winged helix-like DNA-binding domain superfamily/Winged helix DNA-binding domain"/>
    <property type="match status" value="1"/>
</dbReference>
<dbReference type="InterPro" id="IPR004977">
    <property type="entry name" value="Ribosomal_eS25"/>
</dbReference>
<dbReference type="InterPro" id="IPR036388">
    <property type="entry name" value="WH-like_DNA-bd_sf"/>
</dbReference>
<dbReference type="PANTHER" id="PTHR12850">
    <property type="entry name" value="40S RIBOSOMAL PROTEIN S25"/>
    <property type="match status" value="1"/>
</dbReference>
<dbReference type="Pfam" id="PF03297">
    <property type="entry name" value="Ribosomal_S25"/>
    <property type="match status" value="1"/>
</dbReference>
<comment type="function">
    <text evidence="1">Component of the small ribosomal subunit. The ribosome is a large ribonucleoprotein complex responsible for the synthesis of proteins in the cell.</text>
</comment>
<comment type="subunit">
    <text evidence="1">Component of the small ribosomal subunit.</text>
</comment>
<comment type="subcellular location">
    <subcellularLocation>
        <location evidence="1">Cytoplasm</location>
    </subcellularLocation>
</comment>
<comment type="similarity">
    <text evidence="4">Belongs to the eukaryotic ribosomal protein eS25 family.</text>
</comment>
<name>RS25_BOVIN</name>
<reference key="1">
    <citation type="submission" date="2005-01" db="EMBL/GenBank/DDBJ databases">
        <title>Analysis of sequences obtained from constructed full-length bovine cDNA libraries.</title>
        <authorList>
            <person name="Yu J."/>
            <person name="Meng Y."/>
            <person name="Wang Z."/>
            <person name="Hansen C."/>
            <person name="Li C."/>
            <person name="Moore S.S."/>
        </authorList>
    </citation>
    <scope>NUCLEOTIDE SEQUENCE [LARGE SCALE MRNA]</scope>
    <source>
        <tissue>Lymphoid epithelium</tissue>
    </source>
</reference>
<reference key="2">
    <citation type="submission" date="2005-08" db="EMBL/GenBank/DDBJ databases">
        <authorList>
            <consortium name="NIH - Mammalian Gene Collection (MGC) project"/>
        </authorList>
    </citation>
    <scope>NUCLEOTIDE SEQUENCE [LARGE SCALE MRNA]</scope>
    <source>
        <strain>Hereford</strain>
        <tissue>Testis</tissue>
    </source>
</reference>
<feature type="chain" id="PRO_0000237570" description="Small ribosomal subunit protein eS25">
    <location>
        <begin position="1"/>
        <end position="125"/>
    </location>
</feature>
<feature type="region of interest" description="Disordered" evidence="3">
    <location>
        <begin position="1"/>
        <end position="38"/>
    </location>
</feature>
<feature type="compositionally biased region" description="Basic and acidic residues" evidence="3">
    <location>
        <begin position="1"/>
        <end position="23"/>
    </location>
</feature>
<feature type="compositionally biased region" description="Basic residues" evidence="3">
    <location>
        <begin position="28"/>
        <end position="38"/>
    </location>
</feature>
<feature type="modified residue" description="N6-acetyllysine" evidence="2">
    <location>
        <position position="43"/>
    </location>
</feature>
<feature type="modified residue" description="N6-acetyllysine; alternate" evidence="1">
    <location>
        <position position="52"/>
    </location>
</feature>
<feature type="modified residue" description="N6-succinyllysine; alternate" evidence="2">
    <location>
        <position position="52"/>
    </location>
</feature>
<feature type="modified residue" description="N6-acetyllysine" evidence="1">
    <location>
        <position position="60"/>
    </location>
</feature>
<feature type="modified residue" description="N6-acetyllysine" evidence="1">
    <location>
        <position position="66"/>
    </location>
</feature>
<feature type="modified residue" description="N6-acetyllysine; alternate" evidence="1">
    <location>
        <position position="94"/>
    </location>
</feature>
<feature type="modified residue" description="N6-succinyllysine; alternate" evidence="2">
    <location>
        <position position="94"/>
    </location>
</feature>
<evidence type="ECO:0000250" key="1">
    <source>
        <dbReference type="UniProtKB" id="P62851"/>
    </source>
</evidence>
<evidence type="ECO:0000250" key="2">
    <source>
        <dbReference type="UniProtKB" id="P62852"/>
    </source>
</evidence>
<evidence type="ECO:0000256" key="3">
    <source>
        <dbReference type="SAM" id="MobiDB-lite"/>
    </source>
</evidence>
<evidence type="ECO:0000305" key="4"/>
<proteinExistence type="evidence at transcript level"/>
<protein>
    <recommendedName>
        <fullName evidence="4">Small ribosomal subunit protein eS25</fullName>
    </recommendedName>
    <alternativeName>
        <fullName>40S ribosomal protein S25</fullName>
    </alternativeName>
</protein>